<protein>
    <recommendedName>
        <fullName>Beta-2-microglobulin</fullName>
    </recommendedName>
</protein>
<name>B2MG_MESAU</name>
<sequence>MDKVELSDLSFNKDWSFYLLAHREFVPTATDKYACRVSHITLKEPKVVTWERDM</sequence>
<accession>P30442</accession>
<keyword id="KW-0391">Immunity</keyword>
<keyword id="KW-0393">Immunoglobulin domain</keyword>
<keyword id="KW-0490">MHC I</keyword>
<keyword id="KW-1185">Reference proteome</keyword>
<keyword id="KW-0964">Secreted</keyword>
<proteinExistence type="evidence at transcript level"/>
<dbReference type="EMBL" id="X17002">
    <property type="protein sequence ID" value="CAA34865.1"/>
    <property type="molecule type" value="mRNA"/>
</dbReference>
<dbReference type="PIR" id="S15757">
    <property type="entry name" value="S15757"/>
</dbReference>
<dbReference type="SMR" id="P30442"/>
<dbReference type="STRING" id="10036.ENSMAUP00000025837"/>
<dbReference type="eggNOG" id="ENOG502S8GM">
    <property type="taxonomic scope" value="Eukaryota"/>
</dbReference>
<dbReference type="Proteomes" id="UP000189706">
    <property type="component" value="Unplaced"/>
</dbReference>
<dbReference type="GO" id="GO:0005576">
    <property type="term" value="C:extracellular region"/>
    <property type="evidence" value="ECO:0007669"/>
    <property type="project" value="UniProtKB-SubCell"/>
</dbReference>
<dbReference type="GO" id="GO:0042612">
    <property type="term" value="C:MHC class I protein complex"/>
    <property type="evidence" value="ECO:0007669"/>
    <property type="project" value="UniProtKB-KW"/>
</dbReference>
<dbReference type="GO" id="GO:0002474">
    <property type="term" value="P:antigen processing and presentation of peptide antigen via MHC class I"/>
    <property type="evidence" value="ECO:0007669"/>
    <property type="project" value="UniProtKB-KW"/>
</dbReference>
<dbReference type="Gene3D" id="2.60.40.10">
    <property type="entry name" value="Immunoglobulins"/>
    <property type="match status" value="1"/>
</dbReference>
<dbReference type="InterPro" id="IPR036179">
    <property type="entry name" value="Ig-like_dom_sf"/>
</dbReference>
<dbReference type="InterPro" id="IPR013783">
    <property type="entry name" value="Ig-like_fold"/>
</dbReference>
<dbReference type="InterPro" id="IPR003006">
    <property type="entry name" value="Ig/MHC_CS"/>
</dbReference>
<dbReference type="InterPro" id="IPR003597">
    <property type="entry name" value="Ig_C1-set"/>
</dbReference>
<dbReference type="Pfam" id="PF07654">
    <property type="entry name" value="C1-set"/>
    <property type="match status" value="1"/>
</dbReference>
<dbReference type="SUPFAM" id="SSF48726">
    <property type="entry name" value="Immunoglobulin"/>
    <property type="match status" value="1"/>
</dbReference>
<dbReference type="PROSITE" id="PS00290">
    <property type="entry name" value="IG_MHC"/>
    <property type="match status" value="1"/>
</dbReference>
<comment type="function">
    <text evidence="1">Component of the class I major histocompatibility complex (MHC). Involved in the presentation of peptide antigens to the immune system (By similarity).</text>
</comment>
<comment type="subunit">
    <text evidence="1">Heterodimer of an alpha chain and a beta chain. Beta-2-microglobulin is the beta-chain of major histocompatibility complex class I molecules (By similarity).</text>
</comment>
<comment type="subcellular location">
    <subcellularLocation>
        <location evidence="1">Secreted</location>
    </subcellularLocation>
</comment>
<comment type="similarity">
    <text evidence="3">Belongs to the beta-2-microglobulin family.</text>
</comment>
<gene>
    <name type="primary">B2M</name>
</gene>
<feature type="chain" id="PRO_0000080733" description="Beta-2-microglobulin">
    <location>
        <begin position="1" status="less than"/>
        <end position="54"/>
    </location>
</feature>
<feature type="domain" description="Ig-like C1-type" evidence="2">
    <location>
        <begin position="3"/>
        <end position="41"/>
    </location>
</feature>
<feature type="non-terminal residue">
    <location>
        <position position="1"/>
    </location>
</feature>
<evidence type="ECO:0000250" key="1"/>
<evidence type="ECO:0000255" key="2"/>
<evidence type="ECO:0000305" key="3"/>
<reference key="1">
    <citation type="journal article" date="1990" name="Nucleic Acids Res.">
        <title>Library subtraction of in vitro cDNA libraries to identify differentially expressed genes in scrapie infection.</title>
        <authorList>
            <person name="Duguid J.R."/>
            <person name="Dinauer M.C."/>
        </authorList>
    </citation>
    <scope>NUCLEOTIDE SEQUENCE [MRNA]</scope>
    <source>
        <tissue>Brain</tissue>
    </source>
</reference>
<organism>
    <name type="scientific">Mesocricetus auratus</name>
    <name type="common">Golden hamster</name>
    <dbReference type="NCBI Taxonomy" id="10036"/>
    <lineage>
        <taxon>Eukaryota</taxon>
        <taxon>Metazoa</taxon>
        <taxon>Chordata</taxon>
        <taxon>Craniata</taxon>
        <taxon>Vertebrata</taxon>
        <taxon>Euteleostomi</taxon>
        <taxon>Mammalia</taxon>
        <taxon>Eutheria</taxon>
        <taxon>Euarchontoglires</taxon>
        <taxon>Glires</taxon>
        <taxon>Rodentia</taxon>
        <taxon>Myomorpha</taxon>
        <taxon>Muroidea</taxon>
        <taxon>Cricetidae</taxon>
        <taxon>Cricetinae</taxon>
        <taxon>Mesocricetus</taxon>
    </lineage>
</organism>